<feature type="chain" id="PRO_0000448974" description="Glucokinase">
    <location>
        <begin position="1"/>
        <end position="296"/>
    </location>
</feature>
<name>GLK_PYRCJ</name>
<protein>
    <recommendedName>
        <fullName evidence="2">Glucokinase</fullName>
        <ecNumber evidence="1">2.7.1.2</ecNumber>
    </recommendedName>
    <alternativeName>
        <fullName evidence="2">ATP-dependent glucokinase</fullName>
        <shortName evidence="3">ATP-GLK</shortName>
    </alternativeName>
    <alternativeName>
        <fullName evidence="3">Glucose kinase</fullName>
    </alternativeName>
</protein>
<keyword id="KW-0067">ATP-binding</keyword>
<keyword id="KW-0119">Carbohydrate metabolism</keyword>
<keyword id="KW-0313">Glucose metabolism</keyword>
<keyword id="KW-0418">Kinase</keyword>
<keyword id="KW-0460">Magnesium</keyword>
<keyword id="KW-0547">Nucleotide-binding</keyword>
<keyword id="KW-0808">Transferase</keyword>
<organism>
    <name type="scientific">Pyrobaculum calidifontis (strain DSM 21063 / JCM 11548 / VA1)</name>
    <dbReference type="NCBI Taxonomy" id="410359"/>
    <lineage>
        <taxon>Archaea</taxon>
        <taxon>Thermoproteota</taxon>
        <taxon>Thermoprotei</taxon>
        <taxon>Thermoproteales</taxon>
        <taxon>Thermoproteaceae</taxon>
        <taxon>Pyrobaculum</taxon>
    </lineage>
</organism>
<sequence>MAKYLGIDVGATWTRAILVDEGGSVLSRAKIRTGVSPVAEIAEVVAGWDFDAVGVGSIGPMDLKTGVVVNSPNSPSRRFPLVEPLKKFKRPVVVANDCVAAVWGEYVFKYHVDNMAYLTLSTGVGVGAIVNGVLLLGKDGNAHELGHAVIDFKSPRRCGCGGLGHFEAFVGGANMPSFYQEVAGEGPLLPEEIFKRAREGYRKAVEFLDVWLDALAAGVATILAAYDPELLIVGGSIALNNWDIVGRELPKRLVKYLGVRGAEIRPASFGDDEVAIGAAALAYKTPETLKKFGYPR</sequence>
<evidence type="ECO:0000269" key="1">
    <source>
    </source>
</evidence>
<evidence type="ECO:0000303" key="2">
    <source>
    </source>
</evidence>
<evidence type="ECO:0000305" key="3"/>
<evidence type="ECO:0000312" key="4">
    <source>
        <dbReference type="EMBL" id="ABO08457.1"/>
    </source>
</evidence>
<accession>A3MUZ0</accession>
<reference key="1">
    <citation type="submission" date="2007-02" db="EMBL/GenBank/DDBJ databases">
        <title>Complete sequence of Pyrobaculum calidifontis JCM 11548.</title>
        <authorList>
            <consortium name="US DOE Joint Genome Institute"/>
            <person name="Copeland A."/>
            <person name="Lucas S."/>
            <person name="Lapidus A."/>
            <person name="Barry K."/>
            <person name="Glavina del Rio T."/>
            <person name="Dalin E."/>
            <person name="Tice H."/>
            <person name="Pitluck S."/>
            <person name="Chain P."/>
            <person name="Malfatti S."/>
            <person name="Shin M."/>
            <person name="Vergez L."/>
            <person name="Schmutz J."/>
            <person name="Larimer F."/>
            <person name="Land M."/>
            <person name="Hauser L."/>
            <person name="Kyrpides N."/>
            <person name="Mikhailova N."/>
            <person name="Cozen A.E."/>
            <person name="Fitz-Gibbon S.T."/>
            <person name="House C.H."/>
            <person name="Saltikov C."/>
            <person name="Lowe T.M."/>
            <person name="Richardson P."/>
        </authorList>
    </citation>
    <scope>NUCLEOTIDE SEQUENCE [LARGE SCALE GENOMIC DNA]</scope>
    <source>
        <strain>DSM 21063 / JCM 11548 / VA1</strain>
    </source>
</reference>
<reference key="2">
    <citation type="journal article" date="2018" name="Extremophiles">
        <title>Enhancement of gene expression in Escherichia coli and characterization of highly stable ATP-dependent glucokinase from Pyrobaculum calidifontis.</title>
        <authorList>
            <person name="Bibi T."/>
            <person name="Ali M."/>
            <person name="Rashid N."/>
            <person name="Muhammad M.A."/>
            <person name="Akhtar M."/>
        </authorList>
    </citation>
    <scope>FUNCTION</scope>
    <scope>CATALYTIC ACTIVITY</scope>
    <scope>COFACTOR</scope>
    <scope>BIOPHYSICOCHEMICAL PROPERTIES</scope>
    <scope>SUBUNIT</scope>
</reference>
<dbReference type="EC" id="2.7.1.2" evidence="1"/>
<dbReference type="EMBL" id="CP000561">
    <property type="protein sequence ID" value="ABO08457.1"/>
    <property type="molecule type" value="Genomic_DNA"/>
</dbReference>
<dbReference type="RefSeq" id="WP_011849715.1">
    <property type="nucleotide sequence ID" value="NC_009073.1"/>
</dbReference>
<dbReference type="SMR" id="A3MUZ0"/>
<dbReference type="STRING" id="410359.Pcal_1032"/>
<dbReference type="GeneID" id="4908828"/>
<dbReference type="KEGG" id="pcl:Pcal_1032"/>
<dbReference type="eggNOG" id="arCOG04280">
    <property type="taxonomic scope" value="Archaea"/>
</dbReference>
<dbReference type="HOGENOM" id="CLU_036604_0_1_2"/>
<dbReference type="OrthoDB" id="206224at2157"/>
<dbReference type="BRENDA" id="2.7.1.2">
    <property type="organism ID" value="7282"/>
</dbReference>
<dbReference type="Proteomes" id="UP000001431">
    <property type="component" value="Chromosome"/>
</dbReference>
<dbReference type="GO" id="GO:0005524">
    <property type="term" value="F:ATP binding"/>
    <property type="evidence" value="ECO:0007669"/>
    <property type="project" value="UniProtKB-KW"/>
</dbReference>
<dbReference type="GO" id="GO:0004340">
    <property type="term" value="F:glucokinase activity"/>
    <property type="evidence" value="ECO:0007669"/>
    <property type="project" value="UniProtKB-EC"/>
</dbReference>
<dbReference type="GO" id="GO:0009384">
    <property type="term" value="F:N-acylmannosamine kinase activity"/>
    <property type="evidence" value="ECO:0007669"/>
    <property type="project" value="TreeGrafter"/>
</dbReference>
<dbReference type="GO" id="GO:0008761">
    <property type="term" value="F:UDP-N-acetylglucosamine 2-epimerase activity"/>
    <property type="evidence" value="ECO:0007669"/>
    <property type="project" value="TreeGrafter"/>
</dbReference>
<dbReference type="GO" id="GO:0006006">
    <property type="term" value="P:glucose metabolic process"/>
    <property type="evidence" value="ECO:0007669"/>
    <property type="project" value="UniProtKB-KW"/>
</dbReference>
<dbReference type="Gene3D" id="3.30.420.40">
    <property type="match status" value="2"/>
</dbReference>
<dbReference type="InterPro" id="IPR043129">
    <property type="entry name" value="ATPase_NBD"/>
</dbReference>
<dbReference type="InterPro" id="IPR054671">
    <property type="entry name" value="GK_pyrobaculum-type"/>
</dbReference>
<dbReference type="InterPro" id="IPR000600">
    <property type="entry name" value="ROK"/>
</dbReference>
<dbReference type="NCBIfam" id="NF045551">
    <property type="entry name" value="GK_Pyrobac"/>
    <property type="match status" value="1"/>
</dbReference>
<dbReference type="PANTHER" id="PTHR18964:SF149">
    <property type="entry name" value="BIFUNCTIONAL UDP-N-ACETYLGLUCOSAMINE 2-EPIMERASE_N-ACETYLMANNOSAMINE KINASE"/>
    <property type="match status" value="1"/>
</dbReference>
<dbReference type="PANTHER" id="PTHR18964">
    <property type="entry name" value="ROK (REPRESSOR, ORF, KINASE) FAMILY"/>
    <property type="match status" value="1"/>
</dbReference>
<dbReference type="Pfam" id="PF00480">
    <property type="entry name" value="ROK"/>
    <property type="match status" value="1"/>
</dbReference>
<dbReference type="SUPFAM" id="SSF53067">
    <property type="entry name" value="Actin-like ATPase domain"/>
    <property type="match status" value="1"/>
</dbReference>
<proteinExistence type="evidence at protein level"/>
<comment type="function">
    <text evidence="1">Catalyzes the phosphorylation of D-glucose to D-glucose 6-phosphate using ATP as the phosphate donor. Has a broad hexose specificity, and in addition to glucose, which shows the highest catalytic efficiency, it can also phosphorylate fructose, mannose, galactose and sorbitol. Can also use CTP, GTP or UTP as phosphoryl donor.</text>
</comment>
<comment type="catalytic activity">
    <reaction evidence="1">
        <text>D-glucose + ATP = D-glucose 6-phosphate + ADP + H(+)</text>
        <dbReference type="Rhea" id="RHEA:17825"/>
        <dbReference type="ChEBI" id="CHEBI:4167"/>
        <dbReference type="ChEBI" id="CHEBI:15378"/>
        <dbReference type="ChEBI" id="CHEBI:30616"/>
        <dbReference type="ChEBI" id="CHEBI:61548"/>
        <dbReference type="ChEBI" id="CHEBI:456216"/>
        <dbReference type="EC" id="2.7.1.2"/>
    </reaction>
</comment>
<comment type="cofactor">
    <cofactor evidence="1">
        <name>a divalent metal cation</name>
        <dbReference type="ChEBI" id="CHEBI:60240"/>
    </cofactor>
    <text evidence="1">Mg(2+) is the most effective ion.</text>
</comment>
<comment type="biophysicochemical properties">
    <kinetics>
        <KM evidence="1">660 uM for glucose</KM>
        <KM evidence="1">900 uM for ATP</KM>
        <Vmax evidence="1">550.0 umol/min/mg enzyme</Vmax>
        <text evidence="1">kcat is 289 sec(-1) with glucose as substrate.</text>
    </kinetics>
    <phDependence>
        <text evidence="1">Optimum pH is 8.0-8.5.</text>
    </phDependence>
    <temperatureDependence>
        <text evidence="1">Optimum temperature is 95 degrees Celsius. Highly thermostable.</text>
    </temperatureDependence>
</comment>
<comment type="subunit">
    <text evidence="1">Homodimer.</text>
</comment>
<comment type="similarity">
    <text evidence="3">Belongs to the ROK (NagC/XylR) family.</text>
</comment>
<gene>
    <name evidence="4" type="ordered locus">Pcal_1032</name>
</gene>